<feature type="chain" id="PRO_1000214308" description="Small ribosomal subunit protein uS4">
    <location>
        <begin position="1"/>
        <end position="181"/>
    </location>
</feature>
<feature type="domain" description="S4 RNA-binding" evidence="1">
    <location>
        <begin position="104"/>
        <end position="166"/>
    </location>
</feature>
<gene>
    <name evidence="1" type="primary">rps4</name>
    <name type="ordered locus">YG5714_2172</name>
</gene>
<reference key="1">
    <citation type="journal article" date="2009" name="Proc. Natl. Acad. Sci. U.S.A.">
        <title>Biogeography of the Sulfolobus islandicus pan-genome.</title>
        <authorList>
            <person name="Reno M.L."/>
            <person name="Held N.L."/>
            <person name="Fields C.J."/>
            <person name="Burke P.V."/>
            <person name="Whitaker R.J."/>
        </authorList>
    </citation>
    <scope>NUCLEOTIDE SEQUENCE [LARGE SCALE GENOMIC DNA]</scope>
    <source>
        <strain>Y.G.57.14 / Yellowstone #1</strain>
    </source>
</reference>
<evidence type="ECO:0000255" key="1">
    <source>
        <dbReference type="HAMAP-Rule" id="MF_01306"/>
    </source>
</evidence>
<evidence type="ECO:0000305" key="2"/>
<sequence>MGDPKKSRKKWESPGHPWIKERIGYEQELLGKYGLRNKREIWIAQSIIRKFRHQARSLLALPPAERAVREKQLVGKLLKMGLLKRETATVDDILSLTEQDLLERRLQTIVYKKGLANTTYQARQLIIHGHIAVNGKRVTSPGYIVNVDEENLIDYYVTSSFKSRPPVMAQQEGGEAGVKQA</sequence>
<dbReference type="EMBL" id="CP001403">
    <property type="protein sequence ID" value="ACP46421.1"/>
    <property type="molecule type" value="Genomic_DNA"/>
</dbReference>
<dbReference type="RefSeq" id="WP_012712013.1">
    <property type="nucleotide sequence ID" value="NC_012622.1"/>
</dbReference>
<dbReference type="SMR" id="C3N8R6"/>
<dbReference type="KEGG" id="siy:YG5714_2172"/>
<dbReference type="HOGENOM" id="CLU_089738_1_1_2"/>
<dbReference type="Proteomes" id="UP000002308">
    <property type="component" value="Chromosome"/>
</dbReference>
<dbReference type="GO" id="GO:0015935">
    <property type="term" value="C:small ribosomal subunit"/>
    <property type="evidence" value="ECO:0007669"/>
    <property type="project" value="InterPro"/>
</dbReference>
<dbReference type="GO" id="GO:0019843">
    <property type="term" value="F:rRNA binding"/>
    <property type="evidence" value="ECO:0007669"/>
    <property type="project" value="UniProtKB-UniRule"/>
</dbReference>
<dbReference type="GO" id="GO:0003735">
    <property type="term" value="F:structural constituent of ribosome"/>
    <property type="evidence" value="ECO:0007669"/>
    <property type="project" value="InterPro"/>
</dbReference>
<dbReference type="GO" id="GO:0042274">
    <property type="term" value="P:ribosomal small subunit biogenesis"/>
    <property type="evidence" value="ECO:0007669"/>
    <property type="project" value="TreeGrafter"/>
</dbReference>
<dbReference type="GO" id="GO:0006412">
    <property type="term" value="P:translation"/>
    <property type="evidence" value="ECO:0007669"/>
    <property type="project" value="UniProtKB-UniRule"/>
</dbReference>
<dbReference type="CDD" id="cd00165">
    <property type="entry name" value="S4"/>
    <property type="match status" value="1"/>
</dbReference>
<dbReference type="FunFam" id="3.10.290.10:FF:000026">
    <property type="entry name" value="30S ribosomal protein S4"/>
    <property type="match status" value="1"/>
</dbReference>
<dbReference type="Gene3D" id="3.10.290.10">
    <property type="entry name" value="RNA-binding S4 domain"/>
    <property type="match status" value="1"/>
</dbReference>
<dbReference type="HAMAP" id="MF_01306_A">
    <property type="entry name" value="Ribosomal_uS4_A"/>
    <property type="match status" value="1"/>
</dbReference>
<dbReference type="InterPro" id="IPR022801">
    <property type="entry name" value="Ribosomal_uS4"/>
</dbReference>
<dbReference type="InterPro" id="IPR022802">
    <property type="entry name" value="Ribosomal_uS4_arc"/>
</dbReference>
<dbReference type="InterPro" id="IPR018079">
    <property type="entry name" value="Ribosomal_uS4_CS"/>
</dbReference>
<dbReference type="InterPro" id="IPR005710">
    <property type="entry name" value="Ribosomal_uS4_euk/arc"/>
</dbReference>
<dbReference type="InterPro" id="IPR001912">
    <property type="entry name" value="Ribosomal_uS4_N"/>
</dbReference>
<dbReference type="InterPro" id="IPR002942">
    <property type="entry name" value="S4_RNA-bd"/>
</dbReference>
<dbReference type="InterPro" id="IPR036986">
    <property type="entry name" value="S4_RNA-bd_sf"/>
</dbReference>
<dbReference type="NCBIfam" id="NF003139">
    <property type="entry name" value="PRK04051.1"/>
    <property type="match status" value="1"/>
</dbReference>
<dbReference type="NCBIfam" id="TIGR01018">
    <property type="entry name" value="uS4_arch"/>
    <property type="match status" value="1"/>
</dbReference>
<dbReference type="PANTHER" id="PTHR11831">
    <property type="entry name" value="30S 40S RIBOSOMAL PROTEIN"/>
    <property type="match status" value="1"/>
</dbReference>
<dbReference type="PANTHER" id="PTHR11831:SF5">
    <property type="entry name" value="40S RIBOSOMAL PROTEIN S9"/>
    <property type="match status" value="1"/>
</dbReference>
<dbReference type="Pfam" id="PF00163">
    <property type="entry name" value="Ribosomal_S4"/>
    <property type="match status" value="1"/>
</dbReference>
<dbReference type="Pfam" id="PF01479">
    <property type="entry name" value="S4"/>
    <property type="match status" value="1"/>
</dbReference>
<dbReference type="SMART" id="SM01390">
    <property type="entry name" value="Ribosomal_S4"/>
    <property type="match status" value="1"/>
</dbReference>
<dbReference type="SMART" id="SM00363">
    <property type="entry name" value="S4"/>
    <property type="match status" value="1"/>
</dbReference>
<dbReference type="SUPFAM" id="SSF55174">
    <property type="entry name" value="Alpha-L RNA-binding motif"/>
    <property type="match status" value="1"/>
</dbReference>
<dbReference type="PROSITE" id="PS00632">
    <property type="entry name" value="RIBOSOMAL_S4"/>
    <property type="match status" value="1"/>
</dbReference>
<dbReference type="PROSITE" id="PS50889">
    <property type="entry name" value="S4"/>
    <property type="match status" value="1"/>
</dbReference>
<proteinExistence type="inferred from homology"/>
<name>RS4_SACI7</name>
<comment type="function">
    <text evidence="1">One of the primary rRNA binding proteins, it binds directly to 16S rRNA where it nucleates assembly of the body of the 30S subunit.</text>
</comment>
<comment type="function">
    <text evidence="1">With S5 and S12 plays an important role in translational accuracy.</text>
</comment>
<comment type="subunit">
    <text evidence="1">Part of the 30S ribosomal subunit. Contacts protein S5. The interaction surface between S4 and S5 is involved in control of translational fidelity.</text>
</comment>
<comment type="similarity">
    <text evidence="1">Belongs to the universal ribosomal protein uS4 family.</text>
</comment>
<accession>C3N8R6</accession>
<keyword id="KW-0687">Ribonucleoprotein</keyword>
<keyword id="KW-0689">Ribosomal protein</keyword>
<keyword id="KW-0694">RNA-binding</keyword>
<keyword id="KW-0699">rRNA-binding</keyword>
<protein>
    <recommendedName>
        <fullName evidence="1">Small ribosomal subunit protein uS4</fullName>
    </recommendedName>
    <alternativeName>
        <fullName evidence="2">30S ribosomal protein S4</fullName>
    </alternativeName>
</protein>
<organism>
    <name type="scientific">Saccharolobus islandicus (strain Y.G.57.14 / Yellowstone #1)</name>
    <name type="common">Sulfolobus islandicus</name>
    <dbReference type="NCBI Taxonomy" id="439386"/>
    <lineage>
        <taxon>Archaea</taxon>
        <taxon>Thermoproteota</taxon>
        <taxon>Thermoprotei</taxon>
        <taxon>Sulfolobales</taxon>
        <taxon>Sulfolobaceae</taxon>
        <taxon>Saccharolobus</taxon>
    </lineage>
</organism>